<evidence type="ECO:0000250" key="1"/>
<evidence type="ECO:0000250" key="2">
    <source>
        <dbReference type="UniProtKB" id="Q5JTV8"/>
    </source>
</evidence>
<evidence type="ECO:0000250" key="3">
    <source>
        <dbReference type="UniProtKB" id="Q5PQX1"/>
    </source>
</evidence>
<evidence type="ECO:0000255" key="4"/>
<evidence type="ECO:0000256" key="5">
    <source>
        <dbReference type="SAM" id="MobiDB-lite"/>
    </source>
</evidence>
<evidence type="ECO:0000269" key="6">
    <source>
    </source>
</evidence>
<evidence type="ECO:0000269" key="7">
    <source>
    </source>
</evidence>
<evidence type="ECO:0000303" key="8">
    <source>
    </source>
</evidence>
<evidence type="ECO:0000303" key="9">
    <source>
    </source>
</evidence>
<evidence type="ECO:0000305" key="10"/>
<evidence type="ECO:0007744" key="11">
    <source>
    </source>
</evidence>
<evidence type="ECO:0007744" key="12">
    <source>
    </source>
</evidence>
<reference key="1">
    <citation type="submission" date="2006-02" db="EMBL/GenBank/DDBJ databases">
        <title>cDNA cloning of mouse lamina-associated polypeptide 1B.</title>
        <authorList>
            <person name="Komoto S."/>
            <person name="Takasaki Y."/>
            <person name="Ando S."/>
        </authorList>
    </citation>
    <scope>NUCLEOTIDE SEQUENCE [MRNA] (ISOFORM 1)</scope>
    <source>
        <strain>BALB/cJ</strain>
    </source>
</reference>
<reference key="2">
    <citation type="journal article" date="2009" name="PLoS Biol.">
        <title>Lineage-specific biology revealed by a finished genome assembly of the mouse.</title>
        <authorList>
            <person name="Church D.M."/>
            <person name="Goodstadt L."/>
            <person name="Hillier L.W."/>
            <person name="Zody M.C."/>
            <person name="Goldstein S."/>
            <person name="She X."/>
            <person name="Bult C.J."/>
            <person name="Agarwala R."/>
            <person name="Cherry J.L."/>
            <person name="DiCuccio M."/>
            <person name="Hlavina W."/>
            <person name="Kapustin Y."/>
            <person name="Meric P."/>
            <person name="Maglott D."/>
            <person name="Birtle Z."/>
            <person name="Marques A.C."/>
            <person name="Graves T."/>
            <person name="Zhou S."/>
            <person name="Teague B."/>
            <person name="Potamousis K."/>
            <person name="Churas C."/>
            <person name="Place M."/>
            <person name="Herschleb J."/>
            <person name="Runnheim R."/>
            <person name="Forrest D."/>
            <person name="Amos-Landgraf J."/>
            <person name="Schwartz D.C."/>
            <person name="Cheng Z."/>
            <person name="Lindblad-Toh K."/>
            <person name="Eichler E.E."/>
            <person name="Ponting C.P."/>
        </authorList>
    </citation>
    <scope>NUCLEOTIDE SEQUENCE [LARGE SCALE GENOMIC DNA]</scope>
    <source>
        <strain>C57BL/6J</strain>
    </source>
</reference>
<reference key="3">
    <citation type="journal article" date="2004" name="Genome Res.">
        <title>The status, quality, and expansion of the NIH full-length cDNA project: the Mammalian Gene Collection (MGC).</title>
        <authorList>
            <consortium name="The MGC Project Team"/>
        </authorList>
    </citation>
    <scope>NUCLEOTIDE SEQUENCE [LARGE SCALE MRNA] (ISOFORM 3)</scope>
    <source>
        <strain>Czech II</strain>
        <tissue>Mammary tumor</tissue>
    </source>
</reference>
<reference key="4">
    <citation type="journal article" date="2005" name="Science">
        <title>The transcriptional landscape of the mammalian genome.</title>
        <authorList>
            <person name="Carninci P."/>
            <person name="Kasukawa T."/>
            <person name="Katayama S."/>
            <person name="Gough J."/>
            <person name="Frith M.C."/>
            <person name="Maeda N."/>
            <person name="Oyama R."/>
            <person name="Ravasi T."/>
            <person name="Lenhard B."/>
            <person name="Wells C."/>
            <person name="Kodzius R."/>
            <person name="Shimokawa K."/>
            <person name="Bajic V.B."/>
            <person name="Brenner S.E."/>
            <person name="Batalov S."/>
            <person name="Forrest A.R."/>
            <person name="Zavolan M."/>
            <person name="Davis M.J."/>
            <person name="Wilming L.G."/>
            <person name="Aidinis V."/>
            <person name="Allen J.E."/>
            <person name="Ambesi-Impiombato A."/>
            <person name="Apweiler R."/>
            <person name="Aturaliya R.N."/>
            <person name="Bailey T.L."/>
            <person name="Bansal M."/>
            <person name="Baxter L."/>
            <person name="Beisel K.W."/>
            <person name="Bersano T."/>
            <person name="Bono H."/>
            <person name="Chalk A.M."/>
            <person name="Chiu K.P."/>
            <person name="Choudhary V."/>
            <person name="Christoffels A."/>
            <person name="Clutterbuck D.R."/>
            <person name="Crowe M.L."/>
            <person name="Dalla E."/>
            <person name="Dalrymple B.P."/>
            <person name="de Bono B."/>
            <person name="Della Gatta G."/>
            <person name="di Bernardo D."/>
            <person name="Down T."/>
            <person name="Engstrom P."/>
            <person name="Fagiolini M."/>
            <person name="Faulkner G."/>
            <person name="Fletcher C.F."/>
            <person name="Fukushima T."/>
            <person name="Furuno M."/>
            <person name="Futaki S."/>
            <person name="Gariboldi M."/>
            <person name="Georgii-Hemming P."/>
            <person name="Gingeras T.R."/>
            <person name="Gojobori T."/>
            <person name="Green R.E."/>
            <person name="Gustincich S."/>
            <person name="Harbers M."/>
            <person name="Hayashi Y."/>
            <person name="Hensch T.K."/>
            <person name="Hirokawa N."/>
            <person name="Hill D."/>
            <person name="Huminiecki L."/>
            <person name="Iacono M."/>
            <person name="Ikeo K."/>
            <person name="Iwama A."/>
            <person name="Ishikawa T."/>
            <person name="Jakt M."/>
            <person name="Kanapin A."/>
            <person name="Katoh M."/>
            <person name="Kawasawa Y."/>
            <person name="Kelso J."/>
            <person name="Kitamura H."/>
            <person name="Kitano H."/>
            <person name="Kollias G."/>
            <person name="Krishnan S.P."/>
            <person name="Kruger A."/>
            <person name="Kummerfeld S.K."/>
            <person name="Kurochkin I.V."/>
            <person name="Lareau L.F."/>
            <person name="Lazarevic D."/>
            <person name="Lipovich L."/>
            <person name="Liu J."/>
            <person name="Liuni S."/>
            <person name="McWilliam S."/>
            <person name="Madan Babu M."/>
            <person name="Madera M."/>
            <person name="Marchionni L."/>
            <person name="Matsuda H."/>
            <person name="Matsuzawa S."/>
            <person name="Miki H."/>
            <person name="Mignone F."/>
            <person name="Miyake S."/>
            <person name="Morris K."/>
            <person name="Mottagui-Tabar S."/>
            <person name="Mulder N."/>
            <person name="Nakano N."/>
            <person name="Nakauchi H."/>
            <person name="Ng P."/>
            <person name="Nilsson R."/>
            <person name="Nishiguchi S."/>
            <person name="Nishikawa S."/>
            <person name="Nori F."/>
            <person name="Ohara O."/>
            <person name="Okazaki Y."/>
            <person name="Orlando V."/>
            <person name="Pang K.C."/>
            <person name="Pavan W.J."/>
            <person name="Pavesi G."/>
            <person name="Pesole G."/>
            <person name="Petrovsky N."/>
            <person name="Piazza S."/>
            <person name="Reed J."/>
            <person name="Reid J.F."/>
            <person name="Ring B.Z."/>
            <person name="Ringwald M."/>
            <person name="Rost B."/>
            <person name="Ruan Y."/>
            <person name="Salzberg S.L."/>
            <person name="Sandelin A."/>
            <person name="Schneider C."/>
            <person name="Schoenbach C."/>
            <person name="Sekiguchi K."/>
            <person name="Semple C.A."/>
            <person name="Seno S."/>
            <person name="Sessa L."/>
            <person name="Sheng Y."/>
            <person name="Shibata Y."/>
            <person name="Shimada H."/>
            <person name="Shimada K."/>
            <person name="Silva D."/>
            <person name="Sinclair B."/>
            <person name="Sperling S."/>
            <person name="Stupka E."/>
            <person name="Sugiura K."/>
            <person name="Sultana R."/>
            <person name="Takenaka Y."/>
            <person name="Taki K."/>
            <person name="Tammoja K."/>
            <person name="Tan S.L."/>
            <person name="Tang S."/>
            <person name="Taylor M.S."/>
            <person name="Tegner J."/>
            <person name="Teichmann S.A."/>
            <person name="Ueda H.R."/>
            <person name="van Nimwegen E."/>
            <person name="Verardo R."/>
            <person name="Wei C.L."/>
            <person name="Yagi K."/>
            <person name="Yamanishi H."/>
            <person name="Zabarovsky E."/>
            <person name="Zhu S."/>
            <person name="Zimmer A."/>
            <person name="Hide W."/>
            <person name="Bult C."/>
            <person name="Grimmond S.M."/>
            <person name="Teasdale R.D."/>
            <person name="Liu E.T."/>
            <person name="Brusic V."/>
            <person name="Quackenbush J."/>
            <person name="Wahlestedt C."/>
            <person name="Mattick J.S."/>
            <person name="Hume D.A."/>
            <person name="Kai C."/>
            <person name="Sasaki D."/>
            <person name="Tomaru Y."/>
            <person name="Fukuda S."/>
            <person name="Kanamori-Katayama M."/>
            <person name="Suzuki M."/>
            <person name="Aoki J."/>
            <person name="Arakawa T."/>
            <person name="Iida J."/>
            <person name="Imamura K."/>
            <person name="Itoh M."/>
            <person name="Kato T."/>
            <person name="Kawaji H."/>
            <person name="Kawagashira N."/>
            <person name="Kawashima T."/>
            <person name="Kojima M."/>
            <person name="Kondo S."/>
            <person name="Konno H."/>
            <person name="Nakano K."/>
            <person name="Ninomiya N."/>
            <person name="Nishio T."/>
            <person name="Okada M."/>
            <person name="Plessy C."/>
            <person name="Shibata K."/>
            <person name="Shiraki T."/>
            <person name="Suzuki S."/>
            <person name="Tagami M."/>
            <person name="Waki K."/>
            <person name="Watahiki A."/>
            <person name="Okamura-Oho Y."/>
            <person name="Suzuki H."/>
            <person name="Kawai J."/>
            <person name="Hayashizaki Y."/>
        </authorList>
    </citation>
    <scope>NUCLEOTIDE SEQUENCE [LARGE SCALE MRNA] OF 108-520 (ISOFORM 2)</scope>
    <source>
        <strain>C57BL/6J</strain>
        <tissue>Bone marrow</tissue>
    </source>
</reference>
<reference key="5">
    <citation type="journal article" date="2005" name="Neuron">
        <title>Loss of the dystonia-associated protein torsinA selectively disrupts the neuronal nuclear envelope.</title>
        <authorList>
            <person name="Goodchild R.E."/>
            <person name="Kim C.E."/>
            <person name="Dauer W.T."/>
        </authorList>
    </citation>
    <scope>DEVELOPMENTAL STAGE</scope>
    <scope>TISSUE SPECIFICITY</scope>
</reference>
<reference key="6">
    <citation type="journal article" date="2007" name="Proc. Natl. Acad. Sci. U.S.A.">
        <title>Large-scale phosphorylation analysis of mouse liver.</title>
        <authorList>
            <person name="Villen J."/>
            <person name="Beausoleil S.A."/>
            <person name="Gerber S.A."/>
            <person name="Gygi S.P."/>
        </authorList>
    </citation>
    <scope>IDENTIFICATION BY MASS SPECTROMETRY [LARGE SCALE ANALYSIS]</scope>
    <source>
        <tissue>Liver</tissue>
    </source>
</reference>
<reference key="7">
    <citation type="journal article" date="2009" name="Immunity">
        <title>The phagosomal proteome in interferon-gamma-activated macrophages.</title>
        <authorList>
            <person name="Trost M."/>
            <person name="English L."/>
            <person name="Lemieux S."/>
            <person name="Courcelles M."/>
            <person name="Desjardins M."/>
            <person name="Thibault P."/>
        </authorList>
    </citation>
    <scope>PHOSPHORYLATION [LARGE SCALE ANALYSIS] AT SER-140</scope>
    <scope>IDENTIFICATION BY MASS SPECTROMETRY [LARGE SCALE ANALYSIS]</scope>
</reference>
<reference key="8">
    <citation type="journal article" date="2010" name="Cell">
        <title>A tissue-specific atlas of mouse protein phosphorylation and expression.</title>
        <authorList>
            <person name="Huttlin E.L."/>
            <person name="Jedrychowski M.P."/>
            <person name="Elias J.E."/>
            <person name="Goswami T."/>
            <person name="Rad R."/>
            <person name="Beausoleil S.A."/>
            <person name="Villen J."/>
            <person name="Haas W."/>
            <person name="Sowa M.E."/>
            <person name="Gygi S.P."/>
        </authorList>
    </citation>
    <scope>PHOSPHORYLATION [LARGE SCALE ANALYSIS] AT SER-60 AND SER-151</scope>
    <scope>IDENTIFICATION BY MASS SPECTROMETRY [LARGE SCALE ANALYSIS]</scope>
    <source>
        <tissue>Brain</tissue>
        <tissue>Kidney</tissue>
        <tissue>Lung</tissue>
        <tissue>Spleen</tissue>
        <tissue>Testis</tissue>
    </source>
</reference>
<reference key="9">
    <citation type="journal article" date="2010" name="Proc. Natl. Acad. Sci. U.S.A.">
        <title>A molecular mechanism underlying the neural-specific defect in torsinA mutant mice.</title>
        <authorList>
            <person name="Kim C.E."/>
            <person name="Perez A."/>
            <person name="Perkins G."/>
            <person name="Ellisman M.H."/>
            <person name="Dauer W.T."/>
        </authorList>
    </citation>
    <scope>FUNCTION IN NUCLEAR ENVELOPE INTEGRITY</scope>
    <scope>INTERACTION WITH TOR1A; TOR1B; TOR2A AND TOR3A</scope>
    <scope>DISRUPTION PHENOTYPE</scope>
    <scope>DEVELOPMENTAL STAGE</scope>
</reference>
<comment type="function">
    <text evidence="7">Required for nuclear membrane integrity. Induces TOR1A and TOR1B ATPase activity and is required for their location on the nuclear membrane. Binds to A- and B-type lamins. Possible role in membrane attachment and assembly of the nuclear lamina.</text>
</comment>
<comment type="subunit">
    <text evidence="7">Interacts with ATP1B4. Interacts with TOR1A (ATP-bound). Interacts with TOR1B, TOR2A and TOR3A. Interacts with VIM.</text>
</comment>
<comment type="subcellular location">
    <subcellularLocation>
        <location evidence="1">Nucleus inner membrane</location>
        <topology evidence="1">Single-pass membrane protein</topology>
    </subcellularLocation>
</comment>
<comment type="alternative products">
    <event type="alternative splicing"/>
    <isoform>
        <id>Q921T2-1</id>
        <name>1</name>
        <sequence type="displayed"/>
    </isoform>
    <isoform>
        <id>Q921T2-2</id>
        <name>2</name>
        <sequence type="described" ref="VSP_042953"/>
    </isoform>
    <isoform>
        <id>Q921T2-3</id>
        <name>3</name>
        <sequence type="described" ref="VSP_042952"/>
    </isoform>
</comment>
<comment type="tissue specificity">
    <text evidence="6">Expressed in the spinal cord and liver (at protein level).</text>
</comment>
<comment type="developmental stage">
    <text evidence="6 7">At 16 dpc, widely expressed with high expression levels in hippocampus and low levels in heart. In the spinal cord, expressed as early as 12 dpc until p21, the expression levels decrease in the adulthood (at protein level).</text>
</comment>
<comment type="disruption phenotype">
    <text evidence="7">Mutant mice exhibit perinatal mortality, typically dying on the last prenatal or first postnatal day. All tissues tested exhibit nuclear membrane abnormalities with membranous vesicle-appearing structures observed in the perinuclear space of neurons.</text>
</comment>
<comment type="similarity">
    <text evidence="10">Belongs to the TOR1AIP family.</text>
</comment>
<comment type="sequence caution" evidence="10">
    <conflict type="erroneous initiation">
        <sequence resource="EMBL-CDS" id="BAE31466"/>
    </conflict>
    <text>Truncated N-terminus.</text>
</comment>
<keyword id="KW-0025">Alternative splicing</keyword>
<keyword id="KW-0175">Coiled coil</keyword>
<keyword id="KW-0325">Glycoprotein</keyword>
<keyword id="KW-1017">Isopeptide bond</keyword>
<keyword id="KW-0472">Membrane</keyword>
<keyword id="KW-0539">Nucleus</keyword>
<keyword id="KW-0597">Phosphoprotein</keyword>
<keyword id="KW-1185">Reference proteome</keyword>
<keyword id="KW-0812">Transmembrane</keyword>
<keyword id="KW-1133">Transmembrane helix</keyword>
<keyword id="KW-0832">Ubl conjugation</keyword>
<proteinExistence type="evidence at protein level"/>
<dbReference type="EMBL" id="AB251963">
    <property type="protein sequence ID" value="BAE94915.1"/>
    <property type="molecule type" value="mRNA"/>
</dbReference>
<dbReference type="EMBL" id="AC159964">
    <property type="status" value="NOT_ANNOTATED_CDS"/>
    <property type="molecule type" value="Genomic_DNA"/>
</dbReference>
<dbReference type="EMBL" id="BC010841">
    <property type="protein sequence ID" value="AAH10841.1"/>
    <property type="molecule type" value="mRNA"/>
</dbReference>
<dbReference type="EMBL" id="AK152751">
    <property type="protein sequence ID" value="BAE31466.1"/>
    <property type="status" value="ALT_INIT"/>
    <property type="molecule type" value="mRNA"/>
</dbReference>
<dbReference type="CCDS" id="CCDS15387.1">
    <molecule id="Q921T2-3"/>
</dbReference>
<dbReference type="CCDS" id="CCDS48402.1">
    <molecule id="Q921T2-2"/>
</dbReference>
<dbReference type="RefSeq" id="NP_001153490.1">
    <molecule id="Q921T2-2"/>
    <property type="nucleotide sequence ID" value="NM_001160018.2"/>
</dbReference>
<dbReference type="RefSeq" id="NP_001153491.1">
    <property type="nucleotide sequence ID" value="NM_001160019.1"/>
</dbReference>
<dbReference type="RefSeq" id="NP_659040.2">
    <molecule id="Q921T2-3"/>
    <property type="nucleotide sequence ID" value="NM_144791.3"/>
</dbReference>
<dbReference type="SMR" id="Q921T2"/>
<dbReference type="BioGRID" id="228970">
    <property type="interactions" value="38"/>
</dbReference>
<dbReference type="DIP" id="DIP-56693N"/>
<dbReference type="FunCoup" id="Q921T2">
    <property type="interactions" value="1673"/>
</dbReference>
<dbReference type="IntAct" id="Q921T2">
    <property type="interactions" value="35"/>
</dbReference>
<dbReference type="STRING" id="10090.ENSMUSP00000095134"/>
<dbReference type="GlyConnect" id="2772">
    <property type="glycosylation" value="3 N-Linked glycans (1 site)"/>
</dbReference>
<dbReference type="GlyCosmos" id="Q921T2">
    <property type="glycosylation" value="1 site, 3 glycans"/>
</dbReference>
<dbReference type="GlyGen" id="Q921T2">
    <property type="glycosylation" value="5 sites, 5 N-linked glycans (2 sites), 1 O-linked glycan (1 site)"/>
</dbReference>
<dbReference type="iPTMnet" id="Q921T2"/>
<dbReference type="PhosphoSitePlus" id="Q921T2"/>
<dbReference type="SwissPalm" id="Q921T2"/>
<dbReference type="jPOST" id="Q921T2"/>
<dbReference type="PeptideAtlas" id="Q921T2"/>
<dbReference type="ProteomicsDB" id="259488">
    <molecule id="Q921T2-1"/>
</dbReference>
<dbReference type="ProteomicsDB" id="259489">
    <molecule id="Q921T2-2"/>
</dbReference>
<dbReference type="ProteomicsDB" id="259490">
    <molecule id="Q921T2-3"/>
</dbReference>
<dbReference type="Pumba" id="Q921T2"/>
<dbReference type="Antibodypedia" id="34423">
    <property type="antibodies" value="114 antibodies from 27 providers"/>
</dbReference>
<dbReference type="Ensembl" id="ENSMUST00000027738.14">
    <molecule id="Q921T2-3"/>
    <property type="protein sequence ID" value="ENSMUSP00000027738.8"/>
    <property type="gene ID" value="ENSMUSG00000026466.17"/>
</dbReference>
<dbReference type="Ensembl" id="ENSMUST00000097527.10">
    <molecule id="Q921T2-2"/>
    <property type="protein sequence ID" value="ENSMUSP00000095134.4"/>
    <property type="gene ID" value="ENSMUSG00000026466.17"/>
</dbReference>
<dbReference type="GeneID" id="208263"/>
<dbReference type="KEGG" id="mmu:208263"/>
<dbReference type="UCSC" id="uc007dbu.2">
    <molecule id="Q921T2-3"/>
    <property type="organism name" value="mouse"/>
</dbReference>
<dbReference type="UCSC" id="uc007dbw.2">
    <molecule id="Q921T2-2"/>
    <property type="organism name" value="mouse"/>
</dbReference>
<dbReference type="AGR" id="MGI:3582693"/>
<dbReference type="CTD" id="26092"/>
<dbReference type="MGI" id="MGI:3582693">
    <property type="gene designation" value="Tor1aip1"/>
</dbReference>
<dbReference type="VEuPathDB" id="HostDB:ENSMUSG00000026466"/>
<dbReference type="eggNOG" id="ENOG502QUV7">
    <property type="taxonomic scope" value="Eukaryota"/>
</dbReference>
<dbReference type="GeneTree" id="ENSGT00390000012166"/>
<dbReference type="HOGENOM" id="CLU_034263_0_1_1"/>
<dbReference type="InParanoid" id="Q921T2"/>
<dbReference type="OMA" id="NASFVKM"/>
<dbReference type="TreeFam" id="TF329438"/>
<dbReference type="Reactome" id="R-MMU-9013405">
    <property type="pathway name" value="RHOD GTPase cycle"/>
</dbReference>
<dbReference type="Reactome" id="R-MMU-9035034">
    <property type="pathway name" value="RHOF GTPase cycle"/>
</dbReference>
<dbReference type="BioGRID-ORCS" id="208263">
    <property type="hits" value="2 hits in 76 CRISPR screens"/>
</dbReference>
<dbReference type="ChiTaRS" id="Tor1aip1">
    <property type="organism name" value="mouse"/>
</dbReference>
<dbReference type="PRO" id="PR:Q921T2"/>
<dbReference type="Proteomes" id="UP000000589">
    <property type="component" value="Chromosome 1"/>
</dbReference>
<dbReference type="RNAct" id="Q921T2">
    <property type="molecule type" value="protein"/>
</dbReference>
<dbReference type="Bgee" id="ENSMUSG00000026466">
    <property type="expression patterns" value="Expressed in spermatid and 244 other cell types or tissues"/>
</dbReference>
<dbReference type="ExpressionAtlas" id="Q921T2">
    <property type="expression patterns" value="baseline and differential"/>
</dbReference>
<dbReference type="GO" id="GO:0005635">
    <property type="term" value="C:nuclear envelope"/>
    <property type="evidence" value="ECO:0000314"/>
    <property type="project" value="MGI"/>
</dbReference>
<dbReference type="GO" id="GO:0005637">
    <property type="term" value="C:nuclear inner membrane"/>
    <property type="evidence" value="ECO:0007669"/>
    <property type="project" value="UniProtKB-SubCell"/>
</dbReference>
<dbReference type="GO" id="GO:0005654">
    <property type="term" value="C:nucleoplasm"/>
    <property type="evidence" value="ECO:0007669"/>
    <property type="project" value="Ensembl"/>
</dbReference>
<dbReference type="GO" id="GO:0005634">
    <property type="term" value="C:nucleus"/>
    <property type="evidence" value="ECO:0000250"/>
    <property type="project" value="UniProtKB"/>
</dbReference>
<dbReference type="GO" id="GO:0001671">
    <property type="term" value="F:ATPase activator activity"/>
    <property type="evidence" value="ECO:0000250"/>
    <property type="project" value="UniProtKB"/>
</dbReference>
<dbReference type="GO" id="GO:0051117">
    <property type="term" value="F:ATPase binding"/>
    <property type="evidence" value="ECO:0007669"/>
    <property type="project" value="Ensembl"/>
</dbReference>
<dbReference type="GO" id="GO:0008092">
    <property type="term" value="F:cytoskeletal protein binding"/>
    <property type="evidence" value="ECO:0007669"/>
    <property type="project" value="Ensembl"/>
</dbReference>
<dbReference type="GO" id="GO:0005521">
    <property type="term" value="F:lamin binding"/>
    <property type="evidence" value="ECO:0007669"/>
    <property type="project" value="Ensembl"/>
</dbReference>
<dbReference type="GO" id="GO:0071763">
    <property type="term" value="P:nuclear membrane organization"/>
    <property type="evidence" value="ECO:0000315"/>
    <property type="project" value="MGI"/>
</dbReference>
<dbReference type="GO" id="GO:0032781">
    <property type="term" value="P:positive regulation of ATP-dependent activity"/>
    <property type="evidence" value="ECO:0000250"/>
    <property type="project" value="UniProtKB"/>
</dbReference>
<dbReference type="GO" id="GO:0090435">
    <property type="term" value="P:protein localization to nuclear envelope"/>
    <property type="evidence" value="ECO:0000315"/>
    <property type="project" value="MGI"/>
</dbReference>
<dbReference type="FunFam" id="3.40.50.12190:FF:000001">
    <property type="entry name" value="torsin-1A-interacting protein 1 isoform X1"/>
    <property type="match status" value="1"/>
</dbReference>
<dbReference type="Gene3D" id="3.40.50.12190">
    <property type="match status" value="1"/>
</dbReference>
<dbReference type="InterPro" id="IPR038599">
    <property type="entry name" value="LAP1C-like_C_sf"/>
</dbReference>
<dbReference type="InterPro" id="IPR008662">
    <property type="entry name" value="TOIP1/2"/>
</dbReference>
<dbReference type="InterPro" id="IPR046753">
    <property type="entry name" value="TOIP1/2_C"/>
</dbReference>
<dbReference type="InterPro" id="IPR046754">
    <property type="entry name" value="TOIP1/2_N"/>
</dbReference>
<dbReference type="PANTHER" id="PTHR18843">
    <property type="entry name" value="TORSIN-1A-INTERACTING PROTEIN"/>
    <property type="match status" value="1"/>
</dbReference>
<dbReference type="PANTHER" id="PTHR18843:SF6">
    <property type="entry name" value="TORSIN-1A-INTERACTING PROTEIN 1"/>
    <property type="match status" value="1"/>
</dbReference>
<dbReference type="Pfam" id="PF05609">
    <property type="entry name" value="LAP1_C"/>
    <property type="match status" value="1"/>
</dbReference>
<dbReference type="Pfam" id="PF20443">
    <property type="entry name" value="LAP1_N"/>
    <property type="match status" value="1"/>
</dbReference>
<accession>Q921T2</accession>
<accession>E9QLK1</accession>
<accession>Q1EQW1</accession>
<accession>Q3U7A4</accession>
<organism>
    <name type="scientific">Mus musculus</name>
    <name type="common">Mouse</name>
    <dbReference type="NCBI Taxonomy" id="10090"/>
    <lineage>
        <taxon>Eukaryota</taxon>
        <taxon>Metazoa</taxon>
        <taxon>Chordata</taxon>
        <taxon>Craniata</taxon>
        <taxon>Vertebrata</taxon>
        <taxon>Euteleostomi</taxon>
        <taxon>Mammalia</taxon>
        <taxon>Eutheria</taxon>
        <taxon>Euarchontoglires</taxon>
        <taxon>Glires</taxon>
        <taxon>Rodentia</taxon>
        <taxon>Myomorpha</taxon>
        <taxon>Muroidea</taxon>
        <taxon>Muridae</taxon>
        <taxon>Murinae</taxon>
        <taxon>Mus</taxon>
        <taxon>Mus</taxon>
    </lineage>
</organism>
<name>TOIP1_MOUSE</name>
<sequence length="595" mass="66781">MAGERWQAEGPGEGWAIYVTPRAPIREGRRRLDPRNGDSSDAPAYGAHPSRRGRREVRFSEEPAEVYGDFEPRAAKERSPGGRRTPPEKFRPASAGEEVRESAYNLRSRPRRQRRAQEAEEMKTRRSARLEQHSQQPQLSPATSGRGLRDSPSSSEDREEDEPSSRPVTSQTASKKTLRTPEASVMNEDPISNLCRPPLRSPRLDSTYQTNGNTKTNEREATIVQQVNFFEEGETEDDLESSYSDITIRARSSDSLESRDEATPAAGNHPDSLRGLPHNQDFPAHENQPLLLTSGCQENPQEWVDRAVRMRSRMAYNNIQKSNFGNQSPSTSRPQSAIHHPNEPSVKIKWWLLGLVAILAVGLFWFFHTPAVETTAVQEFQNQMKQLQSKYQSQNEKLWKRGTTFLEKHLNSSLPRPQPAILLLTAAQDAAEVLKCLSEQIADAYSSFRSVRAIRIDGAGKAAQDSDLVKHEVDQELTDGFKNGQNAAVVHRFESLPAGSTLIFYKYCDHENAAFKDVALVLTVLLEEKTLEASLGLKEIEEKVRDFLKVKFTSSSTASSYNHMDPDKLNGLWSRISHLVLPVQPENTLKAGSCL</sequence>
<gene>
    <name type="primary">Tor1aip1</name>
</gene>
<protein>
    <recommendedName>
        <fullName>Torsin-1A-interacting protein 1</fullName>
    </recommendedName>
    <alternativeName>
        <fullName>Lamina-associated polypeptide 1B</fullName>
        <shortName>LAP1B</shortName>
    </alternativeName>
</protein>
<feature type="chain" id="PRO_0000228836" description="Torsin-1A-interacting protein 1">
    <location>
        <begin position="1"/>
        <end position="595"/>
    </location>
</feature>
<feature type="topological domain" description="Nuclear" evidence="4">
    <location>
        <begin position="1"/>
        <end position="351"/>
    </location>
</feature>
<feature type="transmembrane region" description="Helical" evidence="4">
    <location>
        <begin position="352"/>
        <end position="372"/>
    </location>
</feature>
<feature type="topological domain" description="Perinuclear space" evidence="4">
    <location>
        <begin position="373"/>
        <end position="595"/>
    </location>
</feature>
<feature type="region of interest" description="Disordered" evidence="5">
    <location>
        <begin position="1"/>
        <end position="221"/>
    </location>
</feature>
<feature type="region of interest" description="Disordered" evidence="5">
    <location>
        <begin position="250"/>
        <end position="286"/>
    </location>
</feature>
<feature type="region of interest" description="Disordered" evidence="5">
    <location>
        <begin position="319"/>
        <end position="340"/>
    </location>
</feature>
<feature type="region of interest" description="Interaction with TOR1A" evidence="1">
    <location>
        <begin position="368"/>
        <end position="595"/>
    </location>
</feature>
<feature type="coiled-coil region" evidence="4">
    <location>
        <begin position="373"/>
        <end position="400"/>
    </location>
</feature>
<feature type="compositionally biased region" description="Basic and acidic residues" evidence="5">
    <location>
        <begin position="24"/>
        <end position="38"/>
    </location>
</feature>
<feature type="compositionally biased region" description="Basic and acidic residues" evidence="5">
    <location>
        <begin position="70"/>
        <end position="101"/>
    </location>
</feature>
<feature type="compositionally biased region" description="Basic and acidic residues" evidence="5">
    <location>
        <begin position="115"/>
        <end position="132"/>
    </location>
</feature>
<feature type="compositionally biased region" description="Polar residues" evidence="5">
    <location>
        <begin position="133"/>
        <end position="143"/>
    </location>
</feature>
<feature type="compositionally biased region" description="Polar residues" evidence="5">
    <location>
        <begin position="204"/>
        <end position="215"/>
    </location>
</feature>
<feature type="compositionally biased region" description="Basic and acidic residues" evidence="5">
    <location>
        <begin position="251"/>
        <end position="262"/>
    </location>
</feature>
<feature type="compositionally biased region" description="Polar residues" evidence="5">
    <location>
        <begin position="319"/>
        <end position="335"/>
    </location>
</feature>
<feature type="modified residue" description="Phosphoserine" evidence="12">
    <location>
        <position position="60"/>
    </location>
</feature>
<feature type="modified residue" description="Phosphoserine" evidence="2">
    <location>
        <position position="134"/>
    </location>
</feature>
<feature type="modified residue" description="Phosphoserine" evidence="11">
    <location>
        <position position="140"/>
    </location>
</feature>
<feature type="modified residue" description="Phosphoserine" evidence="12">
    <location>
        <position position="151"/>
    </location>
</feature>
<feature type="modified residue" description="Phosphoserine" evidence="2">
    <location>
        <position position="153"/>
    </location>
</feature>
<feature type="modified residue" description="Phosphoserine" evidence="2">
    <location>
        <position position="154"/>
    </location>
</feature>
<feature type="modified residue" description="Phosphoserine" evidence="3">
    <location>
        <position position="155"/>
    </location>
</feature>
<feature type="modified residue" description="Phosphothreonine" evidence="2">
    <location>
        <position position="235"/>
    </location>
</feature>
<feature type="modified residue" description="Phosphoserine" evidence="2">
    <location>
        <position position="241"/>
    </location>
</feature>
<feature type="modified residue" description="Phosphoserine" evidence="3">
    <location>
        <position position="244"/>
    </location>
</feature>
<feature type="modified residue" description="Phosphoserine" evidence="3">
    <location>
        <position position="255"/>
    </location>
</feature>
<feature type="modified residue" description="Phosphoserine" evidence="2">
    <location>
        <position position="328"/>
    </location>
</feature>
<feature type="glycosylation site" description="N-linked (GlcNAc...) asparagine" evidence="4">
    <location>
        <position position="411"/>
    </location>
</feature>
<feature type="cross-link" description="Glycyl lysine isopeptide (Lys-Gly) (interchain with G-Cter in SUMO2)" evidence="2">
    <location>
        <position position="321"/>
    </location>
</feature>
<feature type="splice variant" id="VSP_042952" description="In isoform 3." evidence="8">
    <original>DEATPAAGNHPDSLRGLPHNQDFPAHENQPLLLTSGCQENPQEWVDRAVRMRSRMAYNNIQKSNFGNQSPSTSRPQ</original>
    <variation>E</variation>
    <location>
        <begin position="260"/>
        <end position="335"/>
    </location>
</feature>
<feature type="splice variant" id="VSP_042953" description="In isoform 2." evidence="9">
    <location>
        <begin position="261"/>
        <end position="279"/>
    </location>
</feature>
<feature type="sequence conflict" description="In Ref. 4; BAE31466." evidence="10" ref="4">
    <original>S</original>
    <variation>A</variation>
    <location>
        <position position="108"/>
    </location>
</feature>
<feature type="sequence conflict" description="In Ref. 1; BAE94915 and 3; AAH10841." evidence="10" ref="1 3">
    <original>D</original>
    <variation>N</variation>
    <location>
        <position position="254"/>
    </location>
</feature>